<protein>
    <recommendedName>
        <fullName evidence="1">Protein RecA</fullName>
    </recommendedName>
    <alternativeName>
        <fullName evidence="1">Recombinase A</fullName>
    </alternativeName>
</protein>
<sequence>MAQNSLRLVEDKSVDKSKALEAALSQIERAFGKGSIMKLGAKDSVVEIETVSTGSLGLDIALGIGGLPKGRIVEIYGPESSGKTTLALQTIAEAQKKGGICGFVDAEHALDPIYARKLGVDLENLLISQPDTGEQALEITDTLVRSGAIDVLVVDSVAALVPRAEIEGEMGDSLPGMQARLMSQALRKLTASISKSNCMVIFINQIRMKIGVMFGSPETTTGGNALKFYASVRLDIRRIGSVKEREEVVGNQTRVKVVKNKMAPPFKQVEFDIMYGEGVSKTGELIDLGVKAGIVEKSGAWFSYNSQRLGQGRENAKLFLRDNPELLREIETALRQNAGLIADRFLENGGPESEGDEAADM</sequence>
<proteinExistence type="inferred from homology"/>
<accession>A6U9N5</accession>
<name>RECA_SINMW</name>
<organism>
    <name type="scientific">Sinorhizobium medicae (strain WSM419)</name>
    <name type="common">Ensifer medicae</name>
    <dbReference type="NCBI Taxonomy" id="366394"/>
    <lineage>
        <taxon>Bacteria</taxon>
        <taxon>Pseudomonadati</taxon>
        <taxon>Pseudomonadota</taxon>
        <taxon>Alphaproteobacteria</taxon>
        <taxon>Hyphomicrobiales</taxon>
        <taxon>Rhizobiaceae</taxon>
        <taxon>Sinorhizobium/Ensifer group</taxon>
        <taxon>Sinorhizobium</taxon>
    </lineage>
</organism>
<reference key="1">
    <citation type="submission" date="2007-06" db="EMBL/GenBank/DDBJ databases">
        <title>Complete sequence of Sinorhizobium medicae WSM419 chromosome.</title>
        <authorList>
            <consortium name="US DOE Joint Genome Institute"/>
            <person name="Copeland A."/>
            <person name="Lucas S."/>
            <person name="Lapidus A."/>
            <person name="Barry K."/>
            <person name="Glavina del Rio T."/>
            <person name="Dalin E."/>
            <person name="Tice H."/>
            <person name="Pitluck S."/>
            <person name="Chain P."/>
            <person name="Malfatti S."/>
            <person name="Shin M."/>
            <person name="Vergez L."/>
            <person name="Schmutz J."/>
            <person name="Larimer F."/>
            <person name="Land M."/>
            <person name="Hauser L."/>
            <person name="Kyrpides N."/>
            <person name="Mikhailova N."/>
            <person name="Reeve W.G."/>
            <person name="Richardson P."/>
        </authorList>
    </citation>
    <scope>NUCLEOTIDE SEQUENCE [LARGE SCALE GENOMIC DNA]</scope>
    <source>
        <strain>WSM419</strain>
    </source>
</reference>
<feature type="chain" id="PRO_1000048005" description="Protein RecA">
    <location>
        <begin position="1"/>
        <end position="361"/>
    </location>
</feature>
<feature type="binding site" evidence="1">
    <location>
        <begin position="77"/>
        <end position="84"/>
    </location>
    <ligand>
        <name>ATP</name>
        <dbReference type="ChEBI" id="CHEBI:30616"/>
    </ligand>
</feature>
<keyword id="KW-0067">ATP-binding</keyword>
<keyword id="KW-0963">Cytoplasm</keyword>
<keyword id="KW-0227">DNA damage</keyword>
<keyword id="KW-0233">DNA recombination</keyword>
<keyword id="KW-0234">DNA repair</keyword>
<keyword id="KW-0238">DNA-binding</keyword>
<keyword id="KW-0547">Nucleotide-binding</keyword>
<keyword id="KW-0742">SOS response</keyword>
<dbReference type="EMBL" id="CP000738">
    <property type="protein sequence ID" value="ABR60365.1"/>
    <property type="molecule type" value="Genomic_DNA"/>
</dbReference>
<dbReference type="RefSeq" id="WP_011975674.1">
    <property type="nucleotide sequence ID" value="NC_009636.1"/>
</dbReference>
<dbReference type="RefSeq" id="YP_001327200.1">
    <property type="nucleotide sequence ID" value="NC_009636.1"/>
</dbReference>
<dbReference type="SMR" id="A6U9N5"/>
<dbReference type="STRING" id="366394.Smed_1522"/>
<dbReference type="GeneID" id="61612755"/>
<dbReference type="KEGG" id="smd:Smed_1522"/>
<dbReference type="PATRIC" id="fig|366394.8.peg.4654"/>
<dbReference type="eggNOG" id="COG0468">
    <property type="taxonomic scope" value="Bacteria"/>
</dbReference>
<dbReference type="HOGENOM" id="CLU_040469_3_2_5"/>
<dbReference type="OrthoDB" id="9776733at2"/>
<dbReference type="Proteomes" id="UP000001108">
    <property type="component" value="Chromosome"/>
</dbReference>
<dbReference type="GO" id="GO:0005829">
    <property type="term" value="C:cytosol"/>
    <property type="evidence" value="ECO:0007669"/>
    <property type="project" value="TreeGrafter"/>
</dbReference>
<dbReference type="GO" id="GO:0005524">
    <property type="term" value="F:ATP binding"/>
    <property type="evidence" value="ECO:0007669"/>
    <property type="project" value="UniProtKB-UniRule"/>
</dbReference>
<dbReference type="GO" id="GO:0016887">
    <property type="term" value="F:ATP hydrolysis activity"/>
    <property type="evidence" value="ECO:0007669"/>
    <property type="project" value="InterPro"/>
</dbReference>
<dbReference type="GO" id="GO:0140664">
    <property type="term" value="F:ATP-dependent DNA damage sensor activity"/>
    <property type="evidence" value="ECO:0007669"/>
    <property type="project" value="InterPro"/>
</dbReference>
<dbReference type="GO" id="GO:0003684">
    <property type="term" value="F:damaged DNA binding"/>
    <property type="evidence" value="ECO:0007669"/>
    <property type="project" value="UniProtKB-UniRule"/>
</dbReference>
<dbReference type="GO" id="GO:0003697">
    <property type="term" value="F:single-stranded DNA binding"/>
    <property type="evidence" value="ECO:0007669"/>
    <property type="project" value="UniProtKB-UniRule"/>
</dbReference>
<dbReference type="GO" id="GO:0006310">
    <property type="term" value="P:DNA recombination"/>
    <property type="evidence" value="ECO:0007669"/>
    <property type="project" value="UniProtKB-UniRule"/>
</dbReference>
<dbReference type="GO" id="GO:0006281">
    <property type="term" value="P:DNA repair"/>
    <property type="evidence" value="ECO:0007669"/>
    <property type="project" value="UniProtKB-UniRule"/>
</dbReference>
<dbReference type="GO" id="GO:0009432">
    <property type="term" value="P:SOS response"/>
    <property type="evidence" value="ECO:0007669"/>
    <property type="project" value="UniProtKB-UniRule"/>
</dbReference>
<dbReference type="CDD" id="cd00983">
    <property type="entry name" value="RecA"/>
    <property type="match status" value="1"/>
</dbReference>
<dbReference type="FunFam" id="3.40.50.300:FF:000087">
    <property type="entry name" value="Recombinase RecA"/>
    <property type="match status" value="1"/>
</dbReference>
<dbReference type="Gene3D" id="3.40.50.300">
    <property type="entry name" value="P-loop containing nucleotide triphosphate hydrolases"/>
    <property type="match status" value="1"/>
</dbReference>
<dbReference type="HAMAP" id="MF_00268">
    <property type="entry name" value="RecA"/>
    <property type="match status" value="1"/>
</dbReference>
<dbReference type="InterPro" id="IPR003593">
    <property type="entry name" value="AAA+_ATPase"/>
</dbReference>
<dbReference type="InterPro" id="IPR013765">
    <property type="entry name" value="DNA_recomb/repair_RecA"/>
</dbReference>
<dbReference type="InterPro" id="IPR020584">
    <property type="entry name" value="DNA_recomb/repair_RecA_CS"/>
</dbReference>
<dbReference type="InterPro" id="IPR027417">
    <property type="entry name" value="P-loop_NTPase"/>
</dbReference>
<dbReference type="InterPro" id="IPR049261">
    <property type="entry name" value="RecA-like_C"/>
</dbReference>
<dbReference type="InterPro" id="IPR049428">
    <property type="entry name" value="RecA-like_N"/>
</dbReference>
<dbReference type="InterPro" id="IPR020588">
    <property type="entry name" value="RecA_ATP-bd"/>
</dbReference>
<dbReference type="InterPro" id="IPR023400">
    <property type="entry name" value="RecA_C_sf"/>
</dbReference>
<dbReference type="InterPro" id="IPR020587">
    <property type="entry name" value="RecA_monomer-monomer_interface"/>
</dbReference>
<dbReference type="NCBIfam" id="TIGR02012">
    <property type="entry name" value="tigrfam_recA"/>
    <property type="match status" value="1"/>
</dbReference>
<dbReference type="PANTHER" id="PTHR45900:SF1">
    <property type="entry name" value="MITOCHONDRIAL DNA REPAIR PROTEIN RECA HOMOLOG-RELATED"/>
    <property type="match status" value="1"/>
</dbReference>
<dbReference type="PANTHER" id="PTHR45900">
    <property type="entry name" value="RECA"/>
    <property type="match status" value="1"/>
</dbReference>
<dbReference type="Pfam" id="PF00154">
    <property type="entry name" value="RecA"/>
    <property type="match status" value="1"/>
</dbReference>
<dbReference type="Pfam" id="PF21096">
    <property type="entry name" value="RecA_C"/>
    <property type="match status" value="1"/>
</dbReference>
<dbReference type="PRINTS" id="PR00142">
    <property type="entry name" value="RECA"/>
</dbReference>
<dbReference type="SMART" id="SM00382">
    <property type="entry name" value="AAA"/>
    <property type="match status" value="1"/>
</dbReference>
<dbReference type="SUPFAM" id="SSF52540">
    <property type="entry name" value="P-loop containing nucleoside triphosphate hydrolases"/>
    <property type="match status" value="1"/>
</dbReference>
<dbReference type="SUPFAM" id="SSF54752">
    <property type="entry name" value="RecA protein, C-terminal domain"/>
    <property type="match status" value="1"/>
</dbReference>
<dbReference type="PROSITE" id="PS00321">
    <property type="entry name" value="RECA_1"/>
    <property type="match status" value="1"/>
</dbReference>
<dbReference type="PROSITE" id="PS50162">
    <property type="entry name" value="RECA_2"/>
    <property type="match status" value="1"/>
</dbReference>
<dbReference type="PROSITE" id="PS50163">
    <property type="entry name" value="RECA_3"/>
    <property type="match status" value="1"/>
</dbReference>
<gene>
    <name evidence="1" type="primary">recA</name>
    <name type="ordered locus">Smed_1522</name>
</gene>
<evidence type="ECO:0000255" key="1">
    <source>
        <dbReference type="HAMAP-Rule" id="MF_00268"/>
    </source>
</evidence>
<comment type="function">
    <text evidence="1">Can catalyze the hydrolysis of ATP in the presence of single-stranded DNA, the ATP-dependent uptake of single-stranded DNA by duplex DNA, and the ATP-dependent hybridization of homologous single-stranded DNAs. It interacts with LexA causing its activation and leading to its autocatalytic cleavage.</text>
</comment>
<comment type="subcellular location">
    <subcellularLocation>
        <location evidence="1">Cytoplasm</location>
    </subcellularLocation>
</comment>
<comment type="similarity">
    <text evidence="1">Belongs to the RecA family.</text>
</comment>